<proteinExistence type="inferred from homology"/>
<keyword id="KW-0963">Cytoplasm</keyword>
<keyword id="KW-0238">DNA-binding</keyword>
<keyword id="KW-1185">Reference proteome</keyword>
<dbReference type="EMBL" id="AP006627">
    <property type="protein sequence ID" value="BAD62581.1"/>
    <property type="molecule type" value="Genomic_DNA"/>
</dbReference>
<dbReference type="SMR" id="Q5WLZ4"/>
<dbReference type="STRING" id="66692.ABC0038"/>
<dbReference type="KEGG" id="bcl:ABC0038"/>
<dbReference type="eggNOG" id="COG0718">
    <property type="taxonomic scope" value="Bacteria"/>
</dbReference>
<dbReference type="HOGENOM" id="CLU_140930_1_0_9"/>
<dbReference type="Proteomes" id="UP000001168">
    <property type="component" value="Chromosome"/>
</dbReference>
<dbReference type="GO" id="GO:0043590">
    <property type="term" value="C:bacterial nucleoid"/>
    <property type="evidence" value="ECO:0007669"/>
    <property type="project" value="UniProtKB-UniRule"/>
</dbReference>
<dbReference type="GO" id="GO:0005829">
    <property type="term" value="C:cytosol"/>
    <property type="evidence" value="ECO:0007669"/>
    <property type="project" value="TreeGrafter"/>
</dbReference>
<dbReference type="GO" id="GO:0003677">
    <property type="term" value="F:DNA binding"/>
    <property type="evidence" value="ECO:0007669"/>
    <property type="project" value="UniProtKB-UniRule"/>
</dbReference>
<dbReference type="FunFam" id="3.30.1310.10:FF:000002">
    <property type="entry name" value="Nucleoid-associated protein IKC_06587"/>
    <property type="match status" value="1"/>
</dbReference>
<dbReference type="Gene3D" id="3.30.1310.10">
    <property type="entry name" value="Nucleoid-associated protein YbaB-like domain"/>
    <property type="match status" value="1"/>
</dbReference>
<dbReference type="HAMAP" id="MF_00274">
    <property type="entry name" value="DNA_YbaB_EbfC"/>
    <property type="match status" value="1"/>
</dbReference>
<dbReference type="InterPro" id="IPR036894">
    <property type="entry name" value="YbaB-like_sf"/>
</dbReference>
<dbReference type="InterPro" id="IPR004401">
    <property type="entry name" value="YbaB/EbfC"/>
</dbReference>
<dbReference type="NCBIfam" id="TIGR00103">
    <property type="entry name" value="DNA_YbaB_EbfC"/>
    <property type="match status" value="1"/>
</dbReference>
<dbReference type="PANTHER" id="PTHR33449">
    <property type="entry name" value="NUCLEOID-ASSOCIATED PROTEIN YBAB"/>
    <property type="match status" value="1"/>
</dbReference>
<dbReference type="PANTHER" id="PTHR33449:SF1">
    <property type="entry name" value="NUCLEOID-ASSOCIATED PROTEIN YBAB"/>
    <property type="match status" value="1"/>
</dbReference>
<dbReference type="Pfam" id="PF02575">
    <property type="entry name" value="YbaB_DNA_bd"/>
    <property type="match status" value="1"/>
</dbReference>
<dbReference type="PIRSF" id="PIRSF004555">
    <property type="entry name" value="UCP004555"/>
    <property type="match status" value="1"/>
</dbReference>
<dbReference type="SUPFAM" id="SSF82607">
    <property type="entry name" value="YbaB-like"/>
    <property type="match status" value="1"/>
</dbReference>
<feature type="chain" id="PRO_1000071912" description="Nucleoid-associated protein ABC0038">
    <location>
        <begin position="1"/>
        <end position="105"/>
    </location>
</feature>
<feature type="region of interest" description="Disordered" evidence="2">
    <location>
        <begin position="1"/>
        <end position="26"/>
    </location>
</feature>
<feature type="compositionally biased region" description="Low complexity" evidence="2">
    <location>
        <begin position="1"/>
        <end position="22"/>
    </location>
</feature>
<reference key="1">
    <citation type="submission" date="2003-10" db="EMBL/GenBank/DDBJ databases">
        <title>The complete genome sequence of the alkaliphilic Bacillus clausii KSM-K16.</title>
        <authorList>
            <person name="Takaki Y."/>
            <person name="Kageyama Y."/>
            <person name="Shimamura S."/>
            <person name="Suzuki H."/>
            <person name="Nishi S."/>
            <person name="Hatada Y."/>
            <person name="Kawai S."/>
            <person name="Ito S."/>
            <person name="Horikoshi K."/>
        </authorList>
    </citation>
    <scope>NUCLEOTIDE SEQUENCE [LARGE SCALE GENOMIC DNA]</scope>
    <source>
        <strain>KSM-K16</strain>
    </source>
</reference>
<gene>
    <name type="ordered locus">ABC0038</name>
</gene>
<evidence type="ECO:0000255" key="1">
    <source>
        <dbReference type="HAMAP-Rule" id="MF_00274"/>
    </source>
</evidence>
<evidence type="ECO:0000256" key="2">
    <source>
        <dbReference type="SAM" id="MobiDB-lite"/>
    </source>
</evidence>
<name>Y038_SHOC1</name>
<organism>
    <name type="scientific">Shouchella clausii (strain KSM-K16)</name>
    <name type="common">Alkalihalobacillus clausii</name>
    <dbReference type="NCBI Taxonomy" id="66692"/>
    <lineage>
        <taxon>Bacteria</taxon>
        <taxon>Bacillati</taxon>
        <taxon>Bacillota</taxon>
        <taxon>Bacilli</taxon>
        <taxon>Bacillales</taxon>
        <taxon>Bacillaceae</taxon>
        <taxon>Shouchella</taxon>
    </lineage>
</organism>
<accession>Q5WLZ4</accession>
<comment type="function">
    <text evidence="1">Binds to DNA and alters its conformation. May be involved in regulation of gene expression, nucleoid organization and DNA protection.</text>
</comment>
<comment type="subunit">
    <text evidence="1">Homodimer.</text>
</comment>
<comment type="subcellular location">
    <subcellularLocation>
        <location evidence="1">Cytoplasm</location>
        <location evidence="1">Nucleoid</location>
    </subcellularLocation>
</comment>
<comment type="similarity">
    <text evidence="1">Belongs to the YbaB/EbfC family.</text>
</comment>
<protein>
    <recommendedName>
        <fullName evidence="1">Nucleoid-associated protein ABC0038</fullName>
    </recommendedName>
</protein>
<sequence length="105" mass="11740">MEMKNMGNMMKQMQKMQKQMMKAQEELKEKTVEATVGGGMVTVIASGDKRILEVNISEDVVDPDDVEMLQDLIIAATNEALKKVDELVEQDLGKFTKGLNMPGMF</sequence>